<keyword id="KW-0067">ATP-binding</keyword>
<keyword id="KW-0963">Cytoplasm</keyword>
<keyword id="KW-0227">DNA damage</keyword>
<keyword id="KW-0228">DNA excision</keyword>
<keyword id="KW-0234">DNA repair</keyword>
<keyword id="KW-0238">DNA-binding</keyword>
<keyword id="KW-0267">Excision nuclease</keyword>
<keyword id="KW-0479">Metal-binding</keyword>
<keyword id="KW-0547">Nucleotide-binding</keyword>
<keyword id="KW-1185">Reference proteome</keyword>
<keyword id="KW-0677">Repeat</keyword>
<keyword id="KW-0742">SOS response</keyword>
<keyword id="KW-0862">Zinc</keyword>
<keyword id="KW-0863">Zinc-finger</keyword>
<proteinExistence type="inferred from homology"/>
<protein>
    <recommendedName>
        <fullName evidence="1">UvrABC system protein A</fullName>
        <shortName evidence="1">UvrA protein</shortName>
    </recommendedName>
    <alternativeName>
        <fullName evidence="1">Excinuclease ABC subunit A</fullName>
    </alternativeName>
</protein>
<sequence>MDEVIKAKRQQQNAGSSLRAITIRGAREHNLKNIDVEIPRDKLVVFTGLSGSGKSSLAFDTIYAEGQRRYVESLSAYARQFLEMMQKPDVDQIDGLSPAISIEQKTTSKNPRSTVGTVTEIYDYMRLLWARVGVPYSPATGLPIESQTVSQMVDRVLALPEGTRLYLLAPVVRGRKGEYRKELAEWLKKGFQRVKIDGTFHELAEAPTLDKKFPHDIDVVVDRIVVRADIGQRLAESFETALKLAEGLAVVEFADAPAAAPAEEKKKTAKIHDKSGPERILFSEKFACPVSGFTIPEIEPRLFSFNNPYGACPACGGLGVEQHVDEDLVIPDKELAIGKGAIAPWAKSSSPYYVQTLTALGKHYKFTLTTKWKDLPKKTRDAILHGSGEDEIKFSYEDGVRSYDTKKPFEGVITNINRRYRETESEWAREELAKYFHDVPCGACNGFRLKPEALCVKVGTKHIGEISELSVKKAGEWFETVPEALNKQQNEIAGRILKEIRERLTFLLDVGLNYLTLSRSSGTLSGGESQRIRLASQIGSGLTGVLYVLDEPSIGLHQRDNARLLDTLKRLRDLGNTVVVVEHDEDAIRLADYVLDIGPGAGMHGGHIVAEGTPAEIMRNPKSLTGKYLTGELEVEVPERRPPNHRRTIKVVNARGNNLKNVTAEIPLGLFTCVTGVSGGGKSTLLIDTLYRAIARKLNNASEGAAPHDRIEGLEHIDKIIDIDQSPIGRTPRSNPATYTGAFTPIREWFAGLPEAKARGYEPGRFSFNVKGGRCEACQGDGVIKIEMHFLPDVYVTCDVCKGKRYNRETLEVLFKGKSIADVLDMTVEEAADFFKAVPRVRETFQTLHRVGLDYIHVGQQATTLSGGEAQRVKLAKELSKRATGRTLYILDEPTTGLHFHDVKKLLEVLHELVAQGNTVVVIEHNLEVIKTADWVIDLGPEGGDGGGEIVAWGPPEDIAKAPRSYTGKFLEPVLKKARKPKRRSTSEAAE</sequence>
<gene>
    <name evidence="1" type="primary">uvrA</name>
    <name type="ordered locus">blr4702</name>
</gene>
<reference key="1">
    <citation type="journal article" date="2002" name="DNA Res.">
        <title>Complete genomic sequence of nitrogen-fixing symbiotic bacterium Bradyrhizobium japonicum USDA110.</title>
        <authorList>
            <person name="Kaneko T."/>
            <person name="Nakamura Y."/>
            <person name="Sato S."/>
            <person name="Minamisawa K."/>
            <person name="Uchiumi T."/>
            <person name="Sasamoto S."/>
            <person name="Watanabe A."/>
            <person name="Idesawa K."/>
            <person name="Iriguchi M."/>
            <person name="Kawashima K."/>
            <person name="Kohara M."/>
            <person name="Matsumoto M."/>
            <person name="Shimpo S."/>
            <person name="Tsuruoka H."/>
            <person name="Wada T."/>
            <person name="Yamada M."/>
            <person name="Tabata S."/>
        </authorList>
    </citation>
    <scope>NUCLEOTIDE SEQUENCE [LARGE SCALE GENOMIC DNA]</scope>
    <source>
        <strain>JCM 10833 / BCRC 13528 / IAM 13628 / NBRC 14792 / USDA 110</strain>
    </source>
</reference>
<dbReference type="EMBL" id="BA000040">
    <property type="protein sequence ID" value="BAC49967.1"/>
    <property type="molecule type" value="Genomic_DNA"/>
</dbReference>
<dbReference type="RefSeq" id="NP_771342.1">
    <property type="nucleotide sequence ID" value="NC_004463.1"/>
</dbReference>
<dbReference type="RefSeq" id="WP_011087470.1">
    <property type="nucleotide sequence ID" value="NC_004463.1"/>
</dbReference>
<dbReference type="SMR" id="Q89L46"/>
<dbReference type="FunCoup" id="Q89L46">
    <property type="interactions" value="383"/>
</dbReference>
<dbReference type="STRING" id="224911.AAV28_20805"/>
<dbReference type="EnsemblBacteria" id="BAC49967">
    <property type="protein sequence ID" value="BAC49967"/>
    <property type="gene ID" value="BAC49967"/>
</dbReference>
<dbReference type="GeneID" id="46491712"/>
<dbReference type="KEGG" id="bja:blr4702"/>
<dbReference type="PATRIC" id="fig|224911.44.peg.4531"/>
<dbReference type="eggNOG" id="COG0178">
    <property type="taxonomic scope" value="Bacteria"/>
</dbReference>
<dbReference type="HOGENOM" id="CLU_001370_0_2_5"/>
<dbReference type="InParanoid" id="Q89L46"/>
<dbReference type="OrthoDB" id="9809851at2"/>
<dbReference type="PhylomeDB" id="Q89L46"/>
<dbReference type="Proteomes" id="UP000002526">
    <property type="component" value="Chromosome"/>
</dbReference>
<dbReference type="GO" id="GO:0005737">
    <property type="term" value="C:cytoplasm"/>
    <property type="evidence" value="ECO:0007669"/>
    <property type="project" value="UniProtKB-SubCell"/>
</dbReference>
<dbReference type="GO" id="GO:0009380">
    <property type="term" value="C:excinuclease repair complex"/>
    <property type="evidence" value="ECO:0007669"/>
    <property type="project" value="InterPro"/>
</dbReference>
<dbReference type="GO" id="GO:0005524">
    <property type="term" value="F:ATP binding"/>
    <property type="evidence" value="ECO:0007669"/>
    <property type="project" value="UniProtKB-UniRule"/>
</dbReference>
<dbReference type="GO" id="GO:0016887">
    <property type="term" value="F:ATP hydrolysis activity"/>
    <property type="evidence" value="ECO:0007669"/>
    <property type="project" value="InterPro"/>
</dbReference>
<dbReference type="GO" id="GO:0003677">
    <property type="term" value="F:DNA binding"/>
    <property type="evidence" value="ECO:0007669"/>
    <property type="project" value="UniProtKB-UniRule"/>
</dbReference>
<dbReference type="GO" id="GO:0009381">
    <property type="term" value="F:excinuclease ABC activity"/>
    <property type="evidence" value="ECO:0007669"/>
    <property type="project" value="UniProtKB-UniRule"/>
</dbReference>
<dbReference type="GO" id="GO:0008270">
    <property type="term" value="F:zinc ion binding"/>
    <property type="evidence" value="ECO:0007669"/>
    <property type="project" value="UniProtKB-UniRule"/>
</dbReference>
<dbReference type="GO" id="GO:0006289">
    <property type="term" value="P:nucleotide-excision repair"/>
    <property type="evidence" value="ECO:0007669"/>
    <property type="project" value="UniProtKB-UniRule"/>
</dbReference>
<dbReference type="GO" id="GO:0009432">
    <property type="term" value="P:SOS response"/>
    <property type="evidence" value="ECO:0007669"/>
    <property type="project" value="UniProtKB-UniRule"/>
</dbReference>
<dbReference type="CDD" id="cd03270">
    <property type="entry name" value="ABC_UvrA_I"/>
    <property type="match status" value="1"/>
</dbReference>
<dbReference type="CDD" id="cd03271">
    <property type="entry name" value="ABC_UvrA_II"/>
    <property type="match status" value="1"/>
</dbReference>
<dbReference type="FunFam" id="1.20.1580.10:FF:000002">
    <property type="entry name" value="UvrABC system protein A"/>
    <property type="match status" value="1"/>
</dbReference>
<dbReference type="Gene3D" id="3.30.190.20">
    <property type="match status" value="1"/>
</dbReference>
<dbReference type="Gene3D" id="1.10.8.280">
    <property type="entry name" value="ABC transporter ATPase domain-like"/>
    <property type="match status" value="1"/>
</dbReference>
<dbReference type="Gene3D" id="1.20.1580.10">
    <property type="entry name" value="ABC transporter ATPase like domain"/>
    <property type="match status" value="3"/>
</dbReference>
<dbReference type="Gene3D" id="3.40.50.300">
    <property type="entry name" value="P-loop containing nucleotide triphosphate hydrolases"/>
    <property type="match status" value="3"/>
</dbReference>
<dbReference type="HAMAP" id="MF_00205">
    <property type="entry name" value="UvrA"/>
    <property type="match status" value="1"/>
</dbReference>
<dbReference type="InterPro" id="IPR003439">
    <property type="entry name" value="ABC_transporter-like_ATP-bd"/>
</dbReference>
<dbReference type="InterPro" id="IPR017871">
    <property type="entry name" value="ABC_transporter-like_CS"/>
</dbReference>
<dbReference type="InterPro" id="IPR027417">
    <property type="entry name" value="P-loop_NTPase"/>
</dbReference>
<dbReference type="InterPro" id="IPR004602">
    <property type="entry name" value="UvrA"/>
</dbReference>
<dbReference type="InterPro" id="IPR041552">
    <property type="entry name" value="UvrA_DNA-bd"/>
</dbReference>
<dbReference type="InterPro" id="IPR041102">
    <property type="entry name" value="UvrA_inter"/>
</dbReference>
<dbReference type="NCBIfam" id="NF001503">
    <property type="entry name" value="PRK00349.1"/>
    <property type="match status" value="1"/>
</dbReference>
<dbReference type="NCBIfam" id="TIGR00630">
    <property type="entry name" value="uvra"/>
    <property type="match status" value="1"/>
</dbReference>
<dbReference type="PANTHER" id="PTHR43152">
    <property type="entry name" value="UVRABC SYSTEM PROTEIN A"/>
    <property type="match status" value="1"/>
</dbReference>
<dbReference type="PANTHER" id="PTHR43152:SF3">
    <property type="entry name" value="UVRABC SYSTEM PROTEIN A"/>
    <property type="match status" value="1"/>
</dbReference>
<dbReference type="Pfam" id="PF00005">
    <property type="entry name" value="ABC_tran"/>
    <property type="match status" value="1"/>
</dbReference>
<dbReference type="Pfam" id="PF17755">
    <property type="entry name" value="UvrA_DNA-bind"/>
    <property type="match status" value="1"/>
</dbReference>
<dbReference type="Pfam" id="PF17760">
    <property type="entry name" value="UvrA_inter"/>
    <property type="match status" value="1"/>
</dbReference>
<dbReference type="SUPFAM" id="SSF52540">
    <property type="entry name" value="P-loop containing nucleoside triphosphate hydrolases"/>
    <property type="match status" value="2"/>
</dbReference>
<dbReference type="PROSITE" id="PS00211">
    <property type="entry name" value="ABC_TRANSPORTER_1"/>
    <property type="match status" value="2"/>
</dbReference>
<dbReference type="PROSITE" id="PS50893">
    <property type="entry name" value="ABC_TRANSPORTER_2"/>
    <property type="match status" value="1"/>
</dbReference>
<evidence type="ECO:0000255" key="1">
    <source>
        <dbReference type="HAMAP-Rule" id="MF_00205"/>
    </source>
</evidence>
<accession>Q89L46</accession>
<organism>
    <name type="scientific">Bradyrhizobium diazoefficiens (strain JCM 10833 / BCRC 13528 / IAM 13628 / NBRC 14792 / USDA 110)</name>
    <dbReference type="NCBI Taxonomy" id="224911"/>
    <lineage>
        <taxon>Bacteria</taxon>
        <taxon>Pseudomonadati</taxon>
        <taxon>Pseudomonadota</taxon>
        <taxon>Alphaproteobacteria</taxon>
        <taxon>Hyphomicrobiales</taxon>
        <taxon>Nitrobacteraceae</taxon>
        <taxon>Bradyrhizobium</taxon>
    </lineage>
</organism>
<feature type="chain" id="PRO_0000093037" description="UvrABC system protein A">
    <location>
        <begin position="1"/>
        <end position="991"/>
    </location>
</feature>
<feature type="domain" description="ABC transporter 1" evidence="1">
    <location>
        <begin position="345"/>
        <end position="624"/>
    </location>
</feature>
<feature type="domain" description="ABC transporter 2" evidence="1">
    <location>
        <begin position="644"/>
        <end position="972"/>
    </location>
</feature>
<feature type="zinc finger region" description="C4-type" evidence="1">
    <location>
        <begin position="775"/>
        <end position="801"/>
    </location>
</feature>
<feature type="binding site" evidence="1">
    <location>
        <begin position="48"/>
        <end position="55"/>
    </location>
    <ligand>
        <name>ATP</name>
        <dbReference type="ChEBI" id="CHEBI:30616"/>
    </ligand>
</feature>
<feature type="binding site" evidence="1">
    <location>
        <begin position="676"/>
        <end position="683"/>
    </location>
    <ligand>
        <name>ATP</name>
        <dbReference type="ChEBI" id="CHEBI:30616"/>
    </ligand>
</feature>
<name>UVRA_BRADU</name>
<comment type="function">
    <text evidence="1">The UvrABC repair system catalyzes the recognition and processing of DNA lesions. UvrA is an ATPase and a DNA-binding protein. A damage recognition complex composed of 2 UvrA and 2 UvrB subunits scans DNA for abnormalities. When the presence of a lesion has been verified by UvrB, the UvrA molecules dissociate.</text>
</comment>
<comment type="subunit">
    <text evidence="1">Forms a heterotetramer with UvrB during the search for lesions.</text>
</comment>
<comment type="subcellular location">
    <subcellularLocation>
        <location evidence="1">Cytoplasm</location>
    </subcellularLocation>
</comment>
<comment type="similarity">
    <text evidence="1">Belongs to the ABC transporter superfamily. UvrA family.</text>
</comment>